<accession>Q601S2</accession>
<sequence length="452" mass="49453">MSKITKVFAREILDSRGNPTIQVDVYTLAGGFGSAIVPSGASTGSREALELRDTNTKYADNWYGQKGVMTAVDNVNNIIAPEIIGLCCKNQRLIDQKMIELDGTPNKEKLGANAILGVSLAVAKAAANELRMPLFRYLGGTNPTLMPVPMLNVINGGEHASNTLDFQEFMIMPLGFRTFKEALQAANKVFHNLAKLLKKSGFETQVGDEGGFAPNFNSHEQALDFLVDAIKESGFNPGFKGENAVAIAIDAAASEFYNGQKYVFKKLKAASLSKNQADLDEKFEFSSEELLNYYGQLLAKYPIISIEDGFAESDWQGFIAFNQKYGNNHQIVGDDLTVTNVEILKKAINLKAINSILIKLNQIGTLSETLDAIHLAQKSGMTAVISHRSGESEDTTIADLAVAVSSGQIKTGSLSRTDRIAKYNRLLVIEEYLNSYAKADYIGREVFYNLKK</sequence>
<proteinExistence type="inferred from homology"/>
<evidence type="ECO:0000255" key="1">
    <source>
        <dbReference type="HAMAP-Rule" id="MF_00318"/>
    </source>
</evidence>
<feature type="chain" id="PRO_0000133924" description="Enolase">
    <location>
        <begin position="1"/>
        <end position="452"/>
    </location>
</feature>
<feature type="active site" description="Proton donor" evidence="1">
    <location>
        <position position="209"/>
    </location>
</feature>
<feature type="active site" description="Proton acceptor" evidence="1">
    <location>
        <position position="359"/>
    </location>
</feature>
<feature type="binding site" evidence="1">
    <location>
        <position position="167"/>
    </location>
    <ligand>
        <name>(2R)-2-phosphoglycerate</name>
        <dbReference type="ChEBI" id="CHEBI:58289"/>
    </ligand>
</feature>
<feature type="binding site" evidence="1">
    <location>
        <position position="250"/>
    </location>
    <ligand>
        <name>Mg(2+)</name>
        <dbReference type="ChEBI" id="CHEBI:18420"/>
    </ligand>
</feature>
<feature type="binding site" evidence="1">
    <location>
        <position position="307"/>
    </location>
    <ligand>
        <name>Mg(2+)</name>
        <dbReference type="ChEBI" id="CHEBI:18420"/>
    </ligand>
</feature>
<feature type="binding site" evidence="1">
    <location>
        <position position="334"/>
    </location>
    <ligand>
        <name>Mg(2+)</name>
        <dbReference type="ChEBI" id="CHEBI:18420"/>
    </ligand>
</feature>
<feature type="binding site" evidence="1">
    <location>
        <position position="359"/>
    </location>
    <ligand>
        <name>(2R)-2-phosphoglycerate</name>
        <dbReference type="ChEBI" id="CHEBI:58289"/>
    </ligand>
</feature>
<feature type="binding site" evidence="1">
    <location>
        <position position="388"/>
    </location>
    <ligand>
        <name>(2R)-2-phosphoglycerate</name>
        <dbReference type="ChEBI" id="CHEBI:58289"/>
    </ligand>
</feature>
<feature type="binding site" evidence="1">
    <location>
        <position position="389"/>
    </location>
    <ligand>
        <name>(2R)-2-phosphoglycerate</name>
        <dbReference type="ChEBI" id="CHEBI:58289"/>
    </ligand>
</feature>
<feature type="binding site" evidence="1">
    <location>
        <position position="410"/>
    </location>
    <ligand>
        <name>(2R)-2-phosphoglycerate</name>
        <dbReference type="ChEBI" id="CHEBI:58289"/>
    </ligand>
</feature>
<gene>
    <name evidence="1" type="primary">eno</name>
    <name type="ordered locus">mhp129</name>
</gene>
<protein>
    <recommendedName>
        <fullName evidence="1">Enolase</fullName>
        <ecNumber evidence="1">4.2.1.11</ecNumber>
    </recommendedName>
    <alternativeName>
        <fullName evidence="1">2-phospho-D-glycerate hydro-lyase</fullName>
    </alternativeName>
    <alternativeName>
        <fullName evidence="1">2-phosphoglycerate dehydratase</fullName>
    </alternativeName>
</protein>
<comment type="function">
    <text evidence="1">Catalyzes the reversible conversion of 2-phosphoglycerate (2-PG) into phosphoenolpyruvate (PEP). It is essential for the degradation of carbohydrates via glycolysis.</text>
</comment>
<comment type="catalytic activity">
    <reaction evidence="1">
        <text>(2R)-2-phosphoglycerate = phosphoenolpyruvate + H2O</text>
        <dbReference type="Rhea" id="RHEA:10164"/>
        <dbReference type="ChEBI" id="CHEBI:15377"/>
        <dbReference type="ChEBI" id="CHEBI:58289"/>
        <dbReference type="ChEBI" id="CHEBI:58702"/>
        <dbReference type="EC" id="4.2.1.11"/>
    </reaction>
</comment>
<comment type="cofactor">
    <cofactor evidence="1">
        <name>Mg(2+)</name>
        <dbReference type="ChEBI" id="CHEBI:18420"/>
    </cofactor>
    <text evidence="1">Binds a second Mg(2+) ion via substrate during catalysis.</text>
</comment>
<comment type="pathway">
    <text evidence="1">Carbohydrate degradation; glycolysis; pyruvate from D-glyceraldehyde 3-phosphate: step 4/5.</text>
</comment>
<comment type="subcellular location">
    <subcellularLocation>
        <location evidence="1">Cytoplasm</location>
    </subcellularLocation>
    <subcellularLocation>
        <location evidence="1">Secreted</location>
    </subcellularLocation>
    <subcellularLocation>
        <location evidence="1">Cell surface</location>
    </subcellularLocation>
    <text evidence="1">Fractions of enolase are present in both the cytoplasm and on the cell surface.</text>
</comment>
<comment type="similarity">
    <text evidence="1">Belongs to the enolase family.</text>
</comment>
<name>ENO_MESH2</name>
<organism>
    <name type="scientific">Mesomycoplasma hyopneumoniae (strain 232)</name>
    <name type="common">Mycoplasma hyopneumoniae</name>
    <dbReference type="NCBI Taxonomy" id="295358"/>
    <lineage>
        <taxon>Bacteria</taxon>
        <taxon>Bacillati</taxon>
        <taxon>Mycoplasmatota</taxon>
        <taxon>Mycoplasmoidales</taxon>
        <taxon>Metamycoplasmataceae</taxon>
        <taxon>Mesomycoplasma</taxon>
    </lineage>
</organism>
<reference key="1">
    <citation type="journal article" date="2004" name="J. Bacteriol.">
        <title>The genome sequence of Mycoplasma hyopneumoniae strain 232, the agent of swine mycoplasmosis.</title>
        <authorList>
            <person name="Minion F.C."/>
            <person name="Lefkowitz E.J."/>
            <person name="Madsen M.L."/>
            <person name="Cleary B.J."/>
            <person name="Swartzell S.M."/>
            <person name="Mahairas G.G."/>
        </authorList>
    </citation>
    <scope>NUCLEOTIDE SEQUENCE [LARGE SCALE GENOMIC DNA]</scope>
    <source>
        <strain>232</strain>
    </source>
</reference>
<keyword id="KW-0963">Cytoplasm</keyword>
<keyword id="KW-0324">Glycolysis</keyword>
<keyword id="KW-0456">Lyase</keyword>
<keyword id="KW-0460">Magnesium</keyword>
<keyword id="KW-0479">Metal-binding</keyword>
<keyword id="KW-0964">Secreted</keyword>
<dbReference type="EC" id="4.2.1.11" evidence="1"/>
<dbReference type="EMBL" id="AE017332">
    <property type="protein sequence ID" value="AAV27730.1"/>
    <property type="molecule type" value="Genomic_DNA"/>
</dbReference>
<dbReference type="RefSeq" id="WP_011205967.1">
    <property type="nucleotide sequence ID" value="NC_006360.1"/>
</dbReference>
<dbReference type="SMR" id="Q601S2"/>
<dbReference type="KEGG" id="mhy:mhp129"/>
<dbReference type="eggNOG" id="COG0148">
    <property type="taxonomic scope" value="Bacteria"/>
</dbReference>
<dbReference type="HOGENOM" id="CLU_031223_2_1_14"/>
<dbReference type="PhylomeDB" id="Q601S2"/>
<dbReference type="UniPathway" id="UPA00109">
    <property type="reaction ID" value="UER00187"/>
</dbReference>
<dbReference type="Proteomes" id="UP000006822">
    <property type="component" value="Chromosome"/>
</dbReference>
<dbReference type="GO" id="GO:0009986">
    <property type="term" value="C:cell surface"/>
    <property type="evidence" value="ECO:0007669"/>
    <property type="project" value="UniProtKB-SubCell"/>
</dbReference>
<dbReference type="GO" id="GO:0005576">
    <property type="term" value="C:extracellular region"/>
    <property type="evidence" value="ECO:0007669"/>
    <property type="project" value="UniProtKB-SubCell"/>
</dbReference>
<dbReference type="GO" id="GO:0000015">
    <property type="term" value="C:phosphopyruvate hydratase complex"/>
    <property type="evidence" value="ECO:0007669"/>
    <property type="project" value="InterPro"/>
</dbReference>
<dbReference type="GO" id="GO:0000287">
    <property type="term" value="F:magnesium ion binding"/>
    <property type="evidence" value="ECO:0007669"/>
    <property type="project" value="UniProtKB-UniRule"/>
</dbReference>
<dbReference type="GO" id="GO:0004634">
    <property type="term" value="F:phosphopyruvate hydratase activity"/>
    <property type="evidence" value="ECO:0007669"/>
    <property type="project" value="UniProtKB-UniRule"/>
</dbReference>
<dbReference type="GO" id="GO:0006096">
    <property type="term" value="P:glycolytic process"/>
    <property type="evidence" value="ECO:0007669"/>
    <property type="project" value="UniProtKB-UniRule"/>
</dbReference>
<dbReference type="CDD" id="cd03313">
    <property type="entry name" value="enolase"/>
    <property type="match status" value="1"/>
</dbReference>
<dbReference type="FunFam" id="3.30.390.10:FF:000001">
    <property type="entry name" value="Enolase"/>
    <property type="match status" value="1"/>
</dbReference>
<dbReference type="Gene3D" id="3.20.20.120">
    <property type="entry name" value="Enolase-like C-terminal domain"/>
    <property type="match status" value="1"/>
</dbReference>
<dbReference type="Gene3D" id="3.30.390.10">
    <property type="entry name" value="Enolase-like, N-terminal domain"/>
    <property type="match status" value="1"/>
</dbReference>
<dbReference type="HAMAP" id="MF_00318">
    <property type="entry name" value="Enolase"/>
    <property type="match status" value="1"/>
</dbReference>
<dbReference type="InterPro" id="IPR000941">
    <property type="entry name" value="Enolase"/>
</dbReference>
<dbReference type="InterPro" id="IPR036849">
    <property type="entry name" value="Enolase-like_C_sf"/>
</dbReference>
<dbReference type="InterPro" id="IPR029017">
    <property type="entry name" value="Enolase-like_N"/>
</dbReference>
<dbReference type="InterPro" id="IPR020810">
    <property type="entry name" value="Enolase_C"/>
</dbReference>
<dbReference type="InterPro" id="IPR020809">
    <property type="entry name" value="Enolase_CS"/>
</dbReference>
<dbReference type="InterPro" id="IPR020811">
    <property type="entry name" value="Enolase_N"/>
</dbReference>
<dbReference type="NCBIfam" id="TIGR01060">
    <property type="entry name" value="eno"/>
    <property type="match status" value="1"/>
</dbReference>
<dbReference type="PANTHER" id="PTHR11902">
    <property type="entry name" value="ENOLASE"/>
    <property type="match status" value="1"/>
</dbReference>
<dbReference type="PANTHER" id="PTHR11902:SF1">
    <property type="entry name" value="ENOLASE"/>
    <property type="match status" value="1"/>
</dbReference>
<dbReference type="Pfam" id="PF00113">
    <property type="entry name" value="Enolase_C"/>
    <property type="match status" value="1"/>
</dbReference>
<dbReference type="Pfam" id="PF03952">
    <property type="entry name" value="Enolase_N"/>
    <property type="match status" value="1"/>
</dbReference>
<dbReference type="PIRSF" id="PIRSF001400">
    <property type="entry name" value="Enolase"/>
    <property type="match status" value="1"/>
</dbReference>
<dbReference type="PRINTS" id="PR00148">
    <property type="entry name" value="ENOLASE"/>
</dbReference>
<dbReference type="SFLD" id="SFLDF00002">
    <property type="entry name" value="enolase"/>
    <property type="match status" value="1"/>
</dbReference>
<dbReference type="SFLD" id="SFLDG00178">
    <property type="entry name" value="enolase"/>
    <property type="match status" value="1"/>
</dbReference>
<dbReference type="SMART" id="SM01192">
    <property type="entry name" value="Enolase_C"/>
    <property type="match status" value="1"/>
</dbReference>
<dbReference type="SMART" id="SM01193">
    <property type="entry name" value="Enolase_N"/>
    <property type="match status" value="1"/>
</dbReference>
<dbReference type="SUPFAM" id="SSF51604">
    <property type="entry name" value="Enolase C-terminal domain-like"/>
    <property type="match status" value="1"/>
</dbReference>
<dbReference type="SUPFAM" id="SSF54826">
    <property type="entry name" value="Enolase N-terminal domain-like"/>
    <property type="match status" value="1"/>
</dbReference>
<dbReference type="PROSITE" id="PS00164">
    <property type="entry name" value="ENOLASE"/>
    <property type="match status" value="1"/>
</dbReference>